<accession>A7FXD7</accession>
<keyword id="KW-0067">ATP-binding</keyword>
<keyword id="KW-0436">Ligase</keyword>
<keyword id="KW-0547">Nucleotide-binding</keyword>
<keyword id="KW-0658">Purine biosynthesis</keyword>
<gene>
    <name evidence="1" type="primary">purC</name>
    <name type="ordered locus">CLB_2842</name>
</gene>
<dbReference type="EC" id="6.3.2.6" evidence="1"/>
<dbReference type="EMBL" id="CP000726">
    <property type="protein sequence ID" value="ABS34829.1"/>
    <property type="molecule type" value="Genomic_DNA"/>
</dbReference>
<dbReference type="RefSeq" id="WP_012047943.1">
    <property type="nucleotide sequence ID" value="NC_009697.1"/>
</dbReference>
<dbReference type="SMR" id="A7FXD7"/>
<dbReference type="GeneID" id="5185071"/>
<dbReference type="KEGG" id="cba:CLB_2842"/>
<dbReference type="HOGENOM" id="CLU_061495_2_0_9"/>
<dbReference type="UniPathway" id="UPA00074">
    <property type="reaction ID" value="UER00131"/>
</dbReference>
<dbReference type="GO" id="GO:0005524">
    <property type="term" value="F:ATP binding"/>
    <property type="evidence" value="ECO:0007669"/>
    <property type="project" value="UniProtKB-KW"/>
</dbReference>
<dbReference type="GO" id="GO:0004639">
    <property type="term" value="F:phosphoribosylaminoimidazolesuccinocarboxamide synthase activity"/>
    <property type="evidence" value="ECO:0007669"/>
    <property type="project" value="UniProtKB-UniRule"/>
</dbReference>
<dbReference type="GO" id="GO:0006189">
    <property type="term" value="P:'de novo' IMP biosynthetic process"/>
    <property type="evidence" value="ECO:0007669"/>
    <property type="project" value="UniProtKB-UniRule"/>
</dbReference>
<dbReference type="GO" id="GO:0009236">
    <property type="term" value="P:cobalamin biosynthetic process"/>
    <property type="evidence" value="ECO:0007669"/>
    <property type="project" value="InterPro"/>
</dbReference>
<dbReference type="CDD" id="cd01415">
    <property type="entry name" value="SAICAR_synt_PurC"/>
    <property type="match status" value="1"/>
</dbReference>
<dbReference type="FunFam" id="3.30.200.20:FF:000189">
    <property type="entry name" value="Phosphoribosylaminoimidazole-succinocarboxamide synthase"/>
    <property type="match status" value="1"/>
</dbReference>
<dbReference type="FunFam" id="3.30.470.20:FF:000006">
    <property type="entry name" value="Phosphoribosylaminoimidazole-succinocarboxamide synthase"/>
    <property type="match status" value="1"/>
</dbReference>
<dbReference type="Gene3D" id="3.30.470.20">
    <property type="entry name" value="ATP-grasp fold, B domain"/>
    <property type="match status" value="1"/>
</dbReference>
<dbReference type="Gene3D" id="3.30.200.20">
    <property type="entry name" value="Phosphorylase Kinase, domain 1"/>
    <property type="match status" value="1"/>
</dbReference>
<dbReference type="HAMAP" id="MF_00137">
    <property type="entry name" value="SAICAR_synth"/>
    <property type="match status" value="1"/>
</dbReference>
<dbReference type="InterPro" id="IPR028923">
    <property type="entry name" value="SAICAR_synt/ADE2_N"/>
</dbReference>
<dbReference type="InterPro" id="IPR033934">
    <property type="entry name" value="SAICAR_synt_PurC"/>
</dbReference>
<dbReference type="InterPro" id="IPR001636">
    <property type="entry name" value="SAICAR_synth"/>
</dbReference>
<dbReference type="InterPro" id="IPR050089">
    <property type="entry name" value="SAICAR_synthetase"/>
</dbReference>
<dbReference type="InterPro" id="IPR018236">
    <property type="entry name" value="SAICAR_synthetase_CS"/>
</dbReference>
<dbReference type="NCBIfam" id="TIGR00081">
    <property type="entry name" value="purC"/>
    <property type="match status" value="1"/>
</dbReference>
<dbReference type="PANTHER" id="PTHR43599">
    <property type="entry name" value="MULTIFUNCTIONAL PROTEIN ADE2"/>
    <property type="match status" value="1"/>
</dbReference>
<dbReference type="PANTHER" id="PTHR43599:SF3">
    <property type="entry name" value="SI:DKEY-6E2.2"/>
    <property type="match status" value="1"/>
</dbReference>
<dbReference type="Pfam" id="PF01259">
    <property type="entry name" value="SAICAR_synt"/>
    <property type="match status" value="1"/>
</dbReference>
<dbReference type="SUPFAM" id="SSF56104">
    <property type="entry name" value="SAICAR synthase-like"/>
    <property type="match status" value="1"/>
</dbReference>
<dbReference type="PROSITE" id="PS01057">
    <property type="entry name" value="SAICAR_SYNTHETASE_1"/>
    <property type="match status" value="1"/>
</dbReference>
<dbReference type="PROSITE" id="PS01058">
    <property type="entry name" value="SAICAR_SYNTHETASE_2"/>
    <property type="match status" value="1"/>
</dbReference>
<comment type="catalytic activity">
    <reaction evidence="1">
        <text>5-amino-1-(5-phospho-D-ribosyl)imidazole-4-carboxylate + L-aspartate + ATP = (2S)-2-[5-amino-1-(5-phospho-beta-D-ribosyl)imidazole-4-carboxamido]succinate + ADP + phosphate + 2 H(+)</text>
        <dbReference type="Rhea" id="RHEA:22628"/>
        <dbReference type="ChEBI" id="CHEBI:15378"/>
        <dbReference type="ChEBI" id="CHEBI:29991"/>
        <dbReference type="ChEBI" id="CHEBI:30616"/>
        <dbReference type="ChEBI" id="CHEBI:43474"/>
        <dbReference type="ChEBI" id="CHEBI:58443"/>
        <dbReference type="ChEBI" id="CHEBI:77657"/>
        <dbReference type="ChEBI" id="CHEBI:456216"/>
        <dbReference type="EC" id="6.3.2.6"/>
    </reaction>
</comment>
<comment type="pathway">
    <text evidence="1">Purine metabolism; IMP biosynthesis via de novo pathway; 5-amino-1-(5-phospho-D-ribosyl)imidazole-4-carboxamide from 5-amino-1-(5-phospho-D-ribosyl)imidazole-4-carboxylate: step 1/2.</text>
</comment>
<comment type="similarity">
    <text evidence="1">Belongs to the SAICAR synthetase family.</text>
</comment>
<name>PUR7_CLOB1</name>
<sequence>MEKKDMLYEGKAKKIFRTDDKDTVVVYYKDDATAFNGEKKGTIEDKGVMNNSITAMLFELLEKKGVKTHFIEKINEREQLCKKVEIVPLEVIVRNIAAGSMAKRLGLSEGRKLDTTVFEISYKNDDLNDPLINDYHAVAIGLTTFEELKEMYSIAEKVNNTLKEFFDEQGINLVDFKIEIGRFNGELLLADEISPDTCRLWDKSTGEKLDKDRFRRDMGNVKEAYMEILKRVNK</sequence>
<proteinExistence type="inferred from homology"/>
<feature type="chain" id="PRO_1000018689" description="Phosphoribosylaminoimidazole-succinocarboxamide synthase">
    <location>
        <begin position="1"/>
        <end position="234"/>
    </location>
</feature>
<evidence type="ECO:0000255" key="1">
    <source>
        <dbReference type="HAMAP-Rule" id="MF_00137"/>
    </source>
</evidence>
<organism>
    <name type="scientific">Clostridium botulinum (strain ATCC 19397 / Type A)</name>
    <dbReference type="NCBI Taxonomy" id="441770"/>
    <lineage>
        <taxon>Bacteria</taxon>
        <taxon>Bacillati</taxon>
        <taxon>Bacillota</taxon>
        <taxon>Clostridia</taxon>
        <taxon>Eubacteriales</taxon>
        <taxon>Clostridiaceae</taxon>
        <taxon>Clostridium</taxon>
    </lineage>
</organism>
<protein>
    <recommendedName>
        <fullName evidence="1">Phosphoribosylaminoimidazole-succinocarboxamide synthase</fullName>
        <ecNumber evidence="1">6.3.2.6</ecNumber>
    </recommendedName>
    <alternativeName>
        <fullName evidence="1">SAICAR synthetase</fullName>
    </alternativeName>
</protein>
<reference key="1">
    <citation type="journal article" date="2007" name="PLoS ONE">
        <title>Analysis of the neurotoxin complex genes in Clostridium botulinum A1-A4 and B1 strains: BoNT/A3, /Ba4 and /B1 clusters are located within plasmids.</title>
        <authorList>
            <person name="Smith T.J."/>
            <person name="Hill K.K."/>
            <person name="Foley B.T."/>
            <person name="Detter J.C."/>
            <person name="Munk A.C."/>
            <person name="Bruce D.C."/>
            <person name="Doggett N.A."/>
            <person name="Smith L.A."/>
            <person name="Marks J.D."/>
            <person name="Xie G."/>
            <person name="Brettin T.S."/>
        </authorList>
    </citation>
    <scope>NUCLEOTIDE SEQUENCE [LARGE SCALE GENOMIC DNA]</scope>
    <source>
        <strain>ATCC 19397 / Type A</strain>
    </source>
</reference>